<gene>
    <name type="ordered locus">CLM_0018</name>
</gene>
<organism>
    <name type="scientific">Clostridium botulinum (strain Kyoto / Type A2)</name>
    <dbReference type="NCBI Taxonomy" id="536232"/>
    <lineage>
        <taxon>Bacteria</taxon>
        <taxon>Bacillati</taxon>
        <taxon>Bacillota</taxon>
        <taxon>Clostridia</taxon>
        <taxon>Eubacteriales</taxon>
        <taxon>Clostridiaceae</taxon>
        <taxon>Clostridium</taxon>
    </lineage>
</organism>
<dbReference type="EMBL" id="CP001581">
    <property type="protein sequence ID" value="ACO84722.1"/>
    <property type="molecule type" value="Genomic_DNA"/>
</dbReference>
<dbReference type="RefSeq" id="WP_012704378.1">
    <property type="nucleotide sequence ID" value="NC_012563.1"/>
</dbReference>
<dbReference type="SMR" id="C1FPI3"/>
<dbReference type="KEGG" id="cby:CLM_0018"/>
<dbReference type="eggNOG" id="COG1615">
    <property type="taxonomic scope" value="Bacteria"/>
</dbReference>
<dbReference type="HOGENOM" id="CLU_007733_0_0_9"/>
<dbReference type="Proteomes" id="UP000001374">
    <property type="component" value="Chromosome"/>
</dbReference>
<dbReference type="GO" id="GO:0005576">
    <property type="term" value="C:extracellular region"/>
    <property type="evidence" value="ECO:0007669"/>
    <property type="project" value="TreeGrafter"/>
</dbReference>
<dbReference type="GO" id="GO:0005886">
    <property type="term" value="C:plasma membrane"/>
    <property type="evidence" value="ECO:0007669"/>
    <property type="project" value="UniProtKB-SubCell"/>
</dbReference>
<dbReference type="HAMAP" id="MF_01600">
    <property type="entry name" value="UPF0182"/>
    <property type="match status" value="1"/>
</dbReference>
<dbReference type="InterPro" id="IPR005372">
    <property type="entry name" value="UPF0182"/>
</dbReference>
<dbReference type="NCBIfam" id="NF000825">
    <property type="entry name" value="PRK00068.1"/>
    <property type="match status" value="1"/>
</dbReference>
<dbReference type="PANTHER" id="PTHR39344">
    <property type="entry name" value="UPF0182 PROTEIN SLL1060"/>
    <property type="match status" value="1"/>
</dbReference>
<dbReference type="PANTHER" id="PTHR39344:SF1">
    <property type="entry name" value="UPF0182 PROTEIN SLL1060"/>
    <property type="match status" value="1"/>
</dbReference>
<dbReference type="Pfam" id="PF03699">
    <property type="entry name" value="UPF0182"/>
    <property type="match status" value="1"/>
</dbReference>
<protein>
    <recommendedName>
        <fullName evidence="1">UPF0182 protein CLM_0018</fullName>
    </recommendedName>
</protein>
<sequence>MKNKKALFIPLFIIILFIAFFNKIINFIINIKWFKEVNYLAVYFTKMRAIIILMIPIFIIFFISIWMYYKSLIINKNKSVVDIGLNKNNYGKKLFFIFNFIVSIFLAYIFSSSYWYRILQFNNSVDFNVKDPIFFKDVSFYIFKLPLFESLYKVIISLLLFLVITTFIAYFILEAKYKIQSRKDINLKNINHGIKSFAGKQLAIVSGLIILFISFGHLIKIWNLVYSSNGVSFGASYTDVHATLLFYKIIVVITLISSIVTLLSIVKGKFKPVSVCIGITIFLIVSQNIASFLVQNFIVKSNEKTLEQPYIKNNIDLTRKAFALDDIEIRDFDIKNDLQKQDIADNKASIDNVRINSFKPTLEFYNQVQIIRYYYTFNDIDIDRYNINGKYNQVFLAAREIDTDALNPNTWQNRHLIYTHGFGAVMNKVNSVTSEGQPDFVIKDIPPYNKTNIKLTNPRIYFGEKTNDYVIVNTKINEFDYPREDSNKTNKYNGHAGIKMSFINRLLFAINKKDINFLLSKDIKKDSKIIINRNIVERAKKIAPFLTYDSDPYMVIYNGKIYWIIDAYTTTNRYPYSEPYDSINYIRNSAKVVIDSVDGDTNFYITDKKDPIVNNYAKIFKGLFKEEKDAPKEIREHFRYPKDLFSIQSKVLGKYHVKDPGVFYNGEDLWEVSKDQKHVEGETNTNDAPYIIMKLPDQNKEEMVLLNYFNVMKKDNMIALFGARMDGEQYGKKILYKLPSDKTVYSPYLFKQKINQDTNISKELSLWNREGSKVQYGDTIILPIKNSLLYIEPLYLRASGKNSIPEMKRVILSYNDKLVLSSSIQEGIKEIFNSKDNKINDKNEKDSTKTIDDSKLKKAQEYYNKAIEAQKNGDWTKYGENINELGNILNSIK</sequence>
<name>Y018_CLOBJ</name>
<proteinExistence type="inferred from homology"/>
<feature type="chain" id="PRO_1000185783" description="UPF0182 protein CLM_0018">
    <location>
        <begin position="1"/>
        <end position="893"/>
    </location>
</feature>
<feature type="transmembrane region" description="Helical" evidence="1">
    <location>
        <begin position="9"/>
        <end position="29"/>
    </location>
</feature>
<feature type="transmembrane region" description="Helical" evidence="1">
    <location>
        <begin position="49"/>
        <end position="69"/>
    </location>
</feature>
<feature type="transmembrane region" description="Helical" evidence="1">
    <location>
        <begin position="94"/>
        <end position="114"/>
    </location>
</feature>
<feature type="transmembrane region" description="Helical" evidence="1">
    <location>
        <begin position="154"/>
        <end position="174"/>
    </location>
</feature>
<feature type="transmembrane region" description="Helical" evidence="1">
    <location>
        <begin position="202"/>
        <end position="222"/>
    </location>
</feature>
<feature type="transmembrane region" description="Helical" evidence="1">
    <location>
        <begin position="246"/>
        <end position="266"/>
    </location>
</feature>
<feature type="transmembrane region" description="Helical" evidence="1">
    <location>
        <begin position="273"/>
        <end position="293"/>
    </location>
</feature>
<accession>C1FPI3</accession>
<comment type="subcellular location">
    <subcellularLocation>
        <location evidence="1">Cell membrane</location>
        <topology evidence="1">Multi-pass membrane protein</topology>
    </subcellularLocation>
</comment>
<comment type="similarity">
    <text evidence="1">Belongs to the UPF0182 family.</text>
</comment>
<reference key="1">
    <citation type="submission" date="2008-10" db="EMBL/GenBank/DDBJ databases">
        <title>Genome sequence of Clostridium botulinum A2 Kyoto.</title>
        <authorList>
            <person name="Shrivastava S."/>
            <person name="Brinkac L.M."/>
            <person name="Brown J.L."/>
            <person name="Bruce D."/>
            <person name="Detter C.C."/>
            <person name="Johnson E.A."/>
            <person name="Munk C.A."/>
            <person name="Smith L.A."/>
            <person name="Smith T.J."/>
            <person name="Sutton G."/>
            <person name="Brettin T.S."/>
        </authorList>
    </citation>
    <scope>NUCLEOTIDE SEQUENCE [LARGE SCALE GENOMIC DNA]</scope>
    <source>
        <strain>Kyoto / Type A2</strain>
    </source>
</reference>
<evidence type="ECO:0000255" key="1">
    <source>
        <dbReference type="HAMAP-Rule" id="MF_01600"/>
    </source>
</evidence>
<keyword id="KW-1003">Cell membrane</keyword>
<keyword id="KW-0472">Membrane</keyword>
<keyword id="KW-0812">Transmembrane</keyword>
<keyword id="KW-1133">Transmembrane helix</keyword>